<organism>
    <name type="scientific">Rhizobium johnstonii (strain DSM 114642 / LMG 32736 / 3841)</name>
    <name type="common">Rhizobium leguminosarum bv. viciae</name>
    <dbReference type="NCBI Taxonomy" id="216596"/>
    <lineage>
        <taxon>Bacteria</taxon>
        <taxon>Pseudomonadati</taxon>
        <taxon>Pseudomonadota</taxon>
        <taxon>Alphaproteobacteria</taxon>
        <taxon>Hyphomicrobiales</taxon>
        <taxon>Rhizobiaceae</taxon>
        <taxon>Rhizobium/Agrobacterium group</taxon>
        <taxon>Rhizobium</taxon>
        <taxon>Rhizobium johnstonii</taxon>
    </lineage>
</organism>
<accession>Q1MIF1</accession>
<comment type="function">
    <text evidence="1">Forms part of the ribosomal stalk, playing a central role in the interaction of the ribosome with GTP-bound translation factors.</text>
</comment>
<comment type="subunit">
    <text evidence="1">Part of the ribosomal stalk of the 50S ribosomal subunit. The N-terminus interacts with L11 and the large rRNA to form the base of the stalk. The C-terminus forms an elongated spine to which L12 dimers bind in a sequential fashion forming a multimeric L10(L12)X complex.</text>
</comment>
<comment type="similarity">
    <text evidence="1">Belongs to the universal ribosomal protein uL10 family.</text>
</comment>
<feature type="chain" id="PRO_1000005571" description="Large ribosomal subunit protein uL10">
    <location>
        <begin position="1"/>
        <end position="172"/>
    </location>
</feature>
<evidence type="ECO:0000255" key="1">
    <source>
        <dbReference type="HAMAP-Rule" id="MF_00362"/>
    </source>
</evidence>
<evidence type="ECO:0000305" key="2"/>
<reference key="1">
    <citation type="journal article" date="2006" name="Genome Biol.">
        <title>The genome of Rhizobium leguminosarum has recognizable core and accessory components.</title>
        <authorList>
            <person name="Young J.P.W."/>
            <person name="Crossman L.C."/>
            <person name="Johnston A.W.B."/>
            <person name="Thomson N.R."/>
            <person name="Ghazoui Z.F."/>
            <person name="Hull K.H."/>
            <person name="Wexler M."/>
            <person name="Curson A.R.J."/>
            <person name="Todd J.D."/>
            <person name="Poole P.S."/>
            <person name="Mauchline T.H."/>
            <person name="East A.K."/>
            <person name="Quail M.A."/>
            <person name="Churcher C."/>
            <person name="Arrowsmith C."/>
            <person name="Cherevach I."/>
            <person name="Chillingworth T."/>
            <person name="Clarke K."/>
            <person name="Cronin A."/>
            <person name="Davis P."/>
            <person name="Fraser A."/>
            <person name="Hance Z."/>
            <person name="Hauser H."/>
            <person name="Jagels K."/>
            <person name="Moule S."/>
            <person name="Mungall K."/>
            <person name="Norbertczak H."/>
            <person name="Rabbinowitsch E."/>
            <person name="Sanders M."/>
            <person name="Simmonds M."/>
            <person name="Whitehead S."/>
            <person name="Parkhill J."/>
        </authorList>
    </citation>
    <scope>NUCLEOTIDE SEQUENCE [LARGE SCALE GENOMIC DNA]</scope>
    <source>
        <strain>DSM 114642 / LMG 32736 / 3841</strain>
    </source>
</reference>
<proteinExistence type="inferred from homology"/>
<dbReference type="EMBL" id="AM236080">
    <property type="protein sequence ID" value="CAK07259.1"/>
    <property type="molecule type" value="Genomic_DNA"/>
</dbReference>
<dbReference type="RefSeq" id="WP_003547522.1">
    <property type="nucleotide sequence ID" value="NC_008380.1"/>
</dbReference>
<dbReference type="SMR" id="Q1MIF1"/>
<dbReference type="EnsemblBacteria" id="CAK07259">
    <property type="protein sequence ID" value="CAK07259"/>
    <property type="gene ID" value="RL1764"/>
</dbReference>
<dbReference type="GeneID" id="84669477"/>
<dbReference type="KEGG" id="rle:RL1764"/>
<dbReference type="eggNOG" id="COG0244">
    <property type="taxonomic scope" value="Bacteria"/>
</dbReference>
<dbReference type="HOGENOM" id="CLU_092227_0_0_5"/>
<dbReference type="Proteomes" id="UP000006575">
    <property type="component" value="Chromosome"/>
</dbReference>
<dbReference type="GO" id="GO:1990904">
    <property type="term" value="C:ribonucleoprotein complex"/>
    <property type="evidence" value="ECO:0007669"/>
    <property type="project" value="UniProtKB-KW"/>
</dbReference>
<dbReference type="GO" id="GO:0005840">
    <property type="term" value="C:ribosome"/>
    <property type="evidence" value="ECO:0007669"/>
    <property type="project" value="UniProtKB-KW"/>
</dbReference>
<dbReference type="GO" id="GO:0070180">
    <property type="term" value="F:large ribosomal subunit rRNA binding"/>
    <property type="evidence" value="ECO:0007669"/>
    <property type="project" value="UniProtKB-UniRule"/>
</dbReference>
<dbReference type="GO" id="GO:0006412">
    <property type="term" value="P:translation"/>
    <property type="evidence" value="ECO:0007669"/>
    <property type="project" value="UniProtKB-UniRule"/>
</dbReference>
<dbReference type="CDD" id="cd05797">
    <property type="entry name" value="Ribosomal_L10"/>
    <property type="match status" value="1"/>
</dbReference>
<dbReference type="Gene3D" id="3.30.70.1730">
    <property type="match status" value="1"/>
</dbReference>
<dbReference type="Gene3D" id="6.10.250.290">
    <property type="match status" value="1"/>
</dbReference>
<dbReference type="HAMAP" id="MF_00362">
    <property type="entry name" value="Ribosomal_uL10"/>
    <property type="match status" value="1"/>
</dbReference>
<dbReference type="InterPro" id="IPR001790">
    <property type="entry name" value="Ribosomal_uL10"/>
</dbReference>
<dbReference type="InterPro" id="IPR043141">
    <property type="entry name" value="Ribosomal_uL10-like_sf"/>
</dbReference>
<dbReference type="InterPro" id="IPR022973">
    <property type="entry name" value="Ribosomal_uL10_bac"/>
</dbReference>
<dbReference type="InterPro" id="IPR047865">
    <property type="entry name" value="Ribosomal_uL10_bac_type"/>
</dbReference>
<dbReference type="NCBIfam" id="NF000955">
    <property type="entry name" value="PRK00099.1-1"/>
    <property type="match status" value="1"/>
</dbReference>
<dbReference type="PANTHER" id="PTHR11560">
    <property type="entry name" value="39S RIBOSOMAL PROTEIN L10, MITOCHONDRIAL"/>
    <property type="match status" value="1"/>
</dbReference>
<dbReference type="Pfam" id="PF00466">
    <property type="entry name" value="Ribosomal_L10"/>
    <property type="match status" value="1"/>
</dbReference>
<dbReference type="SUPFAM" id="SSF160369">
    <property type="entry name" value="Ribosomal protein L10-like"/>
    <property type="match status" value="1"/>
</dbReference>
<sequence>MERAEKREFVTELNEVFKASGSVVVAHYAGATVAQMNDFRSKMRAAGGTVKVAKNRLAKIALQGTEAEGMSNLFKGQTLIAYSTDPITAPKVVMDFAKTNDKIIVLGGAMGTTTLNADAVKSLATLPSLDELRAKLLGMIQTPATRIAGVVAAPASQLARVFAAYAKKDEAA</sequence>
<protein>
    <recommendedName>
        <fullName evidence="1">Large ribosomal subunit protein uL10</fullName>
    </recommendedName>
    <alternativeName>
        <fullName evidence="2">50S ribosomal protein L10</fullName>
    </alternativeName>
</protein>
<keyword id="KW-0687">Ribonucleoprotein</keyword>
<keyword id="KW-0689">Ribosomal protein</keyword>
<keyword id="KW-0694">RNA-binding</keyword>
<keyword id="KW-0699">rRNA-binding</keyword>
<gene>
    <name evidence="1" type="primary">rplJ</name>
    <name type="ordered locus">RL1764</name>
</gene>
<name>RL10_RHIJ3</name>